<feature type="initiator methionine" description="Removed" evidence="1">
    <location>
        <position position="1"/>
    </location>
</feature>
<feature type="chain" id="PRO_0000275776" description="Photosystem II reaction center protein H">
    <location>
        <begin position="2"/>
        <end position="74"/>
    </location>
</feature>
<feature type="transmembrane region" description="Helical" evidence="2">
    <location>
        <begin position="40"/>
        <end position="60"/>
    </location>
</feature>
<feature type="modified residue" description="Phosphothreonine" evidence="2">
    <location>
        <position position="3"/>
    </location>
</feature>
<accession>Q32RU4</accession>
<dbReference type="EMBL" id="AY958085">
    <property type="protein sequence ID" value="AAX45727.1"/>
    <property type="molecule type" value="Genomic_DNA"/>
</dbReference>
<dbReference type="RefSeq" id="YP_636432.1">
    <property type="nucleotide sequence ID" value="NC_008116.1"/>
</dbReference>
<dbReference type="SMR" id="Q32RU4"/>
<dbReference type="GeneID" id="4108686"/>
<dbReference type="GO" id="GO:0009535">
    <property type="term" value="C:chloroplast thylakoid membrane"/>
    <property type="evidence" value="ECO:0007669"/>
    <property type="project" value="UniProtKB-SubCell"/>
</dbReference>
<dbReference type="GO" id="GO:0009523">
    <property type="term" value="C:photosystem II"/>
    <property type="evidence" value="ECO:0007669"/>
    <property type="project" value="UniProtKB-KW"/>
</dbReference>
<dbReference type="GO" id="GO:0042301">
    <property type="term" value="F:phosphate ion binding"/>
    <property type="evidence" value="ECO:0007669"/>
    <property type="project" value="InterPro"/>
</dbReference>
<dbReference type="GO" id="GO:0015979">
    <property type="term" value="P:photosynthesis"/>
    <property type="evidence" value="ECO:0007669"/>
    <property type="project" value="UniProtKB-UniRule"/>
</dbReference>
<dbReference type="GO" id="GO:0050821">
    <property type="term" value="P:protein stabilization"/>
    <property type="evidence" value="ECO:0007669"/>
    <property type="project" value="InterPro"/>
</dbReference>
<dbReference type="Gene3D" id="1.20.5.880">
    <property type="entry name" value="Photosystem II reaction center protein H"/>
    <property type="match status" value="1"/>
</dbReference>
<dbReference type="HAMAP" id="MF_00752">
    <property type="entry name" value="PSII_PsbH"/>
    <property type="match status" value="1"/>
</dbReference>
<dbReference type="InterPro" id="IPR001056">
    <property type="entry name" value="PSII_PsbH"/>
</dbReference>
<dbReference type="InterPro" id="IPR036863">
    <property type="entry name" value="PSII_PsbH_sf"/>
</dbReference>
<dbReference type="NCBIfam" id="NF002728">
    <property type="entry name" value="PRK02624.1"/>
    <property type="match status" value="1"/>
</dbReference>
<dbReference type="PANTHER" id="PTHR34469">
    <property type="entry name" value="PHOTOSYSTEM II REACTION CENTER PROTEIN H"/>
    <property type="match status" value="1"/>
</dbReference>
<dbReference type="PANTHER" id="PTHR34469:SF4">
    <property type="entry name" value="PHOTOSYSTEM II REACTION CENTER PROTEIN H"/>
    <property type="match status" value="1"/>
</dbReference>
<dbReference type="Pfam" id="PF00737">
    <property type="entry name" value="PsbH"/>
    <property type="match status" value="1"/>
</dbReference>
<dbReference type="SUPFAM" id="SSF161025">
    <property type="entry name" value="Photosystem II 10 kDa phosphoprotein PsbH"/>
    <property type="match status" value="1"/>
</dbReference>
<proteinExistence type="inferred from homology"/>
<evidence type="ECO:0000250" key="1">
    <source>
        <dbReference type="UniProtKB" id="P56780"/>
    </source>
</evidence>
<evidence type="ECO:0000255" key="2">
    <source>
        <dbReference type="HAMAP-Rule" id="MF_00752"/>
    </source>
</evidence>
<gene>
    <name evidence="2" type="primary">psbH</name>
</gene>
<protein>
    <recommendedName>
        <fullName evidence="2">Photosystem II reaction center protein H</fullName>
        <shortName evidence="2">PSII-H</shortName>
    </recommendedName>
    <alternativeName>
        <fullName evidence="2">Photosystem II 10 kDa phosphoprotein</fullName>
    </alternativeName>
</protein>
<keyword id="KW-0150">Chloroplast</keyword>
<keyword id="KW-0472">Membrane</keyword>
<keyword id="KW-0597">Phosphoprotein</keyword>
<keyword id="KW-0602">Photosynthesis</keyword>
<keyword id="KW-0604">Photosystem II</keyword>
<keyword id="KW-0934">Plastid</keyword>
<keyword id="KW-0793">Thylakoid</keyword>
<keyword id="KW-0812">Transmembrane</keyword>
<keyword id="KW-1133">Transmembrane helix</keyword>
<geneLocation type="chloroplast"/>
<comment type="function">
    <text evidence="2">One of the components of the core complex of photosystem II (PSII), required for its stability and/or assembly. PSII is a light-driven water:plastoquinone oxidoreductase that uses light energy to abstract electrons from H(2)O, generating O(2) and a proton gradient subsequently used for ATP formation. It consists of a core antenna complex that captures photons, and an electron transfer chain that converts photonic excitation into a charge separation.</text>
</comment>
<comment type="subunit">
    <text evidence="2">PSII is composed of 1 copy each of membrane proteins PsbA, PsbB, PsbC, PsbD, PsbE, PsbF, PsbH, PsbI, PsbJ, PsbK, PsbL, PsbM, PsbT, PsbX, PsbY, PsbZ, Psb30/Ycf12, at least 3 peripheral proteins of the oxygen-evolving complex and a large number of cofactors. It forms dimeric complexes.</text>
</comment>
<comment type="subcellular location">
    <subcellularLocation>
        <location evidence="2">Plastid</location>
        <location evidence="2">Chloroplast thylakoid membrane</location>
        <topology evidence="2">Single-pass membrane protein</topology>
    </subcellularLocation>
</comment>
<comment type="PTM">
    <text evidence="2">Phosphorylation is a light-dependent reaction catalyzed by a membrane-bound kinase; phosphorylation occurs on Thr residue(s) in the N-terminus of the protein.</text>
</comment>
<comment type="similarity">
    <text evidence="2">Belongs to the PsbH family.</text>
</comment>
<organism>
    <name type="scientific">Staurastrum punctulatum</name>
    <name type="common">Green alga</name>
    <name type="synonym">Cosmoastrum punctulatum</name>
    <dbReference type="NCBI Taxonomy" id="102822"/>
    <lineage>
        <taxon>Eukaryota</taxon>
        <taxon>Viridiplantae</taxon>
        <taxon>Streptophyta</taxon>
        <taxon>Zygnematophyceae</taxon>
        <taxon>Zygnematophycidae</taxon>
        <taxon>Desmidiales</taxon>
        <taxon>Desmidiaceae</taxon>
        <taxon>Staurastrum</taxon>
    </lineage>
</organism>
<reference key="1">
    <citation type="journal article" date="2005" name="BMC Biol.">
        <title>The complete chloroplast DNA sequences of the charophycean green algae Staurastrum and Zygnema reveal that the chloroplast genome underwent extensive changes during the evolution of the Zygnematales.</title>
        <authorList>
            <person name="Turmel M."/>
            <person name="Otis C."/>
            <person name="Lemieux C."/>
        </authorList>
    </citation>
    <scope>NUCLEOTIDE SEQUENCE [LARGE SCALE GENOMIC DNA]</scope>
</reference>
<sequence length="74" mass="8010">MATQIIKDANSKGRRTALGDILKPLNSEYGKVAPGWGTTVLMGVFMALFAVFLVIILELYNASVVLDGIPVSWQ</sequence>
<name>PSBH_STAPU</name>